<comment type="function">
    <text evidence="5 7">Component of the type VII secretion system (Ess). Required for the secretion of substrates including EsxA and EsxB (PubMed:27130157, PubMed:29620499). However, unable to support secretion of the substrate protein EsxC (PubMed:29620499).</text>
</comment>
<comment type="subunit">
    <text evidence="4 6">Homooligomer (PubMed:26785823, PubMed:27723728). Interacts with EsaE (PubMed:27723728).</text>
</comment>
<comment type="subcellular location">
    <subcellularLocation>
        <location evidence="4">Cell membrane</location>
        <topology evidence="2">Multi-pass membrane protein</topology>
    </subcellularLocation>
</comment>
<comment type="disruption phenotype">
    <text evidence="5">Loss of secretion of EsxA and EsxC but not their expression (PubMed:27130157).</text>
</comment>
<comment type="similarity">
    <text evidence="9">Belongs to the EssC family.</text>
</comment>
<keyword id="KW-0067">ATP-binding</keyword>
<keyword id="KW-1003">Cell membrane</keyword>
<keyword id="KW-0472">Membrane</keyword>
<keyword id="KW-0547">Nucleotide-binding</keyword>
<keyword id="KW-1185">Reference proteome</keyword>
<keyword id="KW-0677">Repeat</keyword>
<keyword id="KW-0812">Transmembrane</keyword>
<keyword id="KW-1133">Transmembrane helix</keyword>
<keyword id="KW-0843">Virulence</keyword>
<proteinExistence type="evidence at protein level"/>
<name>ESSC_STAA8</name>
<reference key="1">
    <citation type="book" date="2006" name="Gram positive pathogens, 2nd edition">
        <title>The Staphylococcus aureus NCTC 8325 genome.</title>
        <editorList>
            <person name="Fischetti V."/>
            <person name="Novick R."/>
            <person name="Ferretti J."/>
            <person name="Portnoy D."/>
            <person name="Rood J."/>
        </editorList>
        <authorList>
            <person name="Gillaspy A.F."/>
            <person name="Worrell V."/>
            <person name="Orvis J."/>
            <person name="Roe B.A."/>
            <person name="Dyer D.W."/>
            <person name="Iandolo J.J."/>
        </authorList>
    </citation>
    <scope>NUCLEOTIDE SEQUENCE [LARGE SCALE GENOMIC DNA]</scope>
    <source>
        <strain>NCTC 8325 / PS 47</strain>
    </source>
</reference>
<reference key="2">
    <citation type="journal article" date="2016" name="FEBS Lett.">
        <title>Membrane interactions and self-association of components of the Ess/Type VII secretion system of Staphylococcus aureus.</title>
        <authorList>
            <person name="Jaeger F."/>
            <person name="Zoltner M."/>
            <person name="Kneuper H."/>
            <person name="Hunter W.N."/>
            <person name="Palmer T."/>
        </authorList>
    </citation>
    <scope>SUBUNIT</scope>
    <scope>SUBCELLULAR LOCATION</scope>
    <source>
        <strain>RN6390</strain>
    </source>
</reference>
<reference key="3">
    <citation type="journal article" date="2016" name="Biochem. J.">
        <title>EssC: domain structures inform on the elusive translocation channel in the Type VII secretion system.</title>
        <authorList>
            <person name="Zoltner M."/>
            <person name="Ng W.M."/>
            <person name="Money J.J."/>
            <person name="Fyfe P.K."/>
            <person name="Kneuper H."/>
            <person name="Palmer T."/>
            <person name="Hunter W.N."/>
        </authorList>
    </citation>
    <scope>POSSIBLE FUNCTION</scope>
    <scope>DISRUPTION PHENOTYPE</scope>
    <source>
        <strain>RN6390</strain>
    </source>
</reference>
<reference key="4">
    <citation type="journal article" date="2016" name="Nat. Microbiol.">
        <title>The type VII secretion system of Staphylococcus aureus secretes a nuclease toxin that targets competitor bacteria.</title>
        <authorList>
            <person name="Cao Z."/>
            <person name="Casabona M.G."/>
            <person name="Kneuper H."/>
            <person name="Chalmers J.D."/>
            <person name="Palmer T."/>
        </authorList>
    </citation>
    <scope>INTERACTION WITH ESAE</scope>
    <scope>SUBUNIT</scope>
    <source>
        <strain>NCTC 8325 / PS 47</strain>
    </source>
</reference>
<reference key="5">
    <citation type="journal article" date="2018" name="Microbiology">
        <title>EssC is a specificity determinant for Staphylococcus aureus type VII secretion.</title>
        <authorList>
            <person name="Jaeger F."/>
            <person name="Kneuper H."/>
            <person name="Palmer T."/>
        </authorList>
    </citation>
    <scope>FUNCTION</scope>
    <source>
        <strain>RN6390</strain>
    </source>
</reference>
<protein>
    <recommendedName>
        <fullName evidence="9">Type VII secretion system protein EssC</fullName>
    </recommendedName>
</protein>
<organism>
    <name type="scientific">Staphylococcus aureus (strain NCTC 8325 / PS 47)</name>
    <dbReference type="NCBI Taxonomy" id="93061"/>
    <lineage>
        <taxon>Bacteria</taxon>
        <taxon>Bacillati</taxon>
        <taxon>Bacillota</taxon>
        <taxon>Bacilli</taxon>
        <taxon>Bacillales</taxon>
        <taxon>Staphylococcaceae</taxon>
        <taxon>Staphylococcus</taxon>
    </lineage>
</organism>
<accession>Q2G184</accession>
<feature type="chain" id="PRO_0000437415" description="Type VII secretion system protein EssC">
    <location>
        <begin position="1"/>
        <end position="1479"/>
    </location>
</feature>
<feature type="topological domain" description="Cytoplasmic" evidence="1">
    <location>
        <begin position="1"/>
        <end position="229"/>
    </location>
</feature>
<feature type="transmembrane region" description="Helical" evidence="2">
    <location>
        <begin position="230"/>
        <end position="252"/>
    </location>
</feature>
<feature type="topological domain" description="Extracellular" evidence="1">
    <location>
        <begin position="253"/>
        <end position="256"/>
    </location>
</feature>
<feature type="transmembrane region" description="Helical" evidence="2">
    <location>
        <begin position="257"/>
        <end position="279"/>
    </location>
</feature>
<feature type="topological domain" description="Cytoplasmic" evidence="1">
    <location>
        <begin position="280"/>
        <end position="1479"/>
    </location>
</feature>
<feature type="domain" description="FtsK 1" evidence="3">
    <location>
        <begin position="652"/>
        <end position="846"/>
    </location>
</feature>
<feature type="domain" description="FtsK 2" evidence="3">
    <location>
        <begin position="997"/>
        <end position="1183"/>
    </location>
</feature>
<feature type="region of interest" description="Required for substrate secretion, protein missing this segment is unstable" evidence="5">
    <location>
        <begin position="1"/>
        <end position="189"/>
    </location>
</feature>
<feature type="region of interest" description="Required for substrate secretion, truncated protein is stable" evidence="5">
    <location>
        <begin position="1249"/>
        <end position="1479"/>
    </location>
</feature>
<feature type="binding site" evidence="3">
    <location>
        <begin position="672"/>
        <end position="679"/>
    </location>
    <ligand>
        <name>ATP</name>
        <dbReference type="ChEBI" id="CHEBI:30616"/>
    </ligand>
</feature>
<feature type="binding site" evidence="3">
    <location>
        <begin position="1014"/>
        <end position="1021"/>
    </location>
    <ligand>
        <name>ATP</name>
        <dbReference type="ChEBI" id="CHEBI:30616"/>
    </ligand>
</feature>
<evidence type="ECO:0000250" key="1">
    <source>
        <dbReference type="UniProtKB" id="P0C048"/>
    </source>
</evidence>
<evidence type="ECO:0000255" key="2"/>
<evidence type="ECO:0000255" key="3">
    <source>
        <dbReference type="PROSITE-ProRule" id="PRU00289"/>
    </source>
</evidence>
<evidence type="ECO:0000269" key="4">
    <source>
    </source>
</evidence>
<evidence type="ECO:0000269" key="5">
    <source>
    </source>
</evidence>
<evidence type="ECO:0000269" key="6">
    <source>
    </source>
</evidence>
<evidence type="ECO:0000269" key="7">
    <source>
    </source>
</evidence>
<evidence type="ECO:0000303" key="8">
    <source>
    </source>
</evidence>
<evidence type="ECO:0000305" key="9"/>
<evidence type="ECO:0000312" key="10">
    <source>
        <dbReference type="EMBL" id="ABD29436.1"/>
    </source>
</evidence>
<gene>
    <name evidence="8" type="primary">essC</name>
    <name evidence="10" type="ordered locus">SAOUHSC_00262</name>
</gene>
<sequence length="1479" mass="170931">MHKLIIKYNKQLKMLNLRDGKTYTISEDERADITLKSLGEVIHLEQNNQGTWQANHTSINKVLVRKGDLDDITLQLYTEADYASFAYPSIQDTMTIGPNAYDDMVIQSLMNAIIIKDFQSIQESQYVRIVHDKNTDVYINYELQEQLTNKAYIGDHIYVEGIWLEVQADGLNVLSQNTVASSLIRLTQEMPHAQADDYNTYHRSPRIIHREPTDDIKIERPPQPIQKNNTVIWRSIIPPLVMIALTVVIFLVRPIGIYILMMIGMSTVTIVFGITTYFSEKKKYNKDVEKREKDYKAYLDNKSKEINKAIKAQRFSLNYHYPTVAEIKDIVETKAPRIYEKTSHHHDFLHYKLGIANVEKSFKLDYQEEEFNQRRDELFDDAKELYEFYTDVEQAPLINDLNHGPIAYIGARHLILEELEKMLIQLSTFHSYHDLEFLFVTREDEVETLKWARWLPHMTLRGQNIRGFVYNQRTRDQILTSIYSMIKERIQAVRERSRSNEQIIFTPQLVFVITDMSLIIDHVILEYVNQDLSEYGISLIFVEDVIESLPEHVDTIIDIKSRTEGELITKEKELVQLKFTPENIDNVDKEYIARRLANLIHVEHLKNAIPDSITFLEMYNVKEVDQLDVVNRWRQNETYKTMAVPLGVRGKDDILSLNLHEKAHGPHGLVAGTTGSGKSEIIQSYILSLAINFHPHEVAFLLIDYKGGGMANLFKDLVHLVGTITNLDGDEAMRALTSIKAELRKRQRLFGEHDVNHINQYHKLFKEGIATEPMPHLFIISDEFAELKSEQPDFMKELVSTARIGRSLGIHLILATQKPSGVVDDQIWSNSKFKLALKVQDRQDSNEILKTPDAADITLPGRAYLQVGNNEIYELFQSAWSGATYDIEGDKLEVEDKTIYMINDYGQLQAINKDLSGLEDEETKENQTELEAVIDHIESITTRLEIEEVKRPWLPPLPENVYQEDLVETDFRKLWSDDAKEVELTLGLKDVPEEQYQGPMVLQLKKAGHIALIGSPGYGRTTFLHNIIFDVARHHRPDQAHMYLFDFGTNGLMPVTDIPHVADYFTVDQEDKIAKAIRIFNDEIDRRKKILSQYRVTSISEYRKLTGETIPHVFILIDNFDAVKDSPFQEVFENMMIKMTREGLALDMQVTLTASRANAMKTPMYINMKTRIAMFLYDKSEVSNVVGQQKFAVKDVVGRALLSSDDNVSFHIGQPFKHDETKSYNDQINDEVSAMTEFYKGETPNDIPMMPDEIKYEDYRESLNLPDIVANGALPIGLDYEGVTLQKIKLTEPAMISSENPREIAHIAEIMMKEIDILNEKYAICIADSSGEFKAYRHQVANFAEEREDIKAIHQLMIEDLKQREMDGPFEKDSLYIINDFKTFIDCTYIPEDDVKKLITKGPELGLNILFVGIHKELIDAYDKQIDVARKMINQFSIGIRISDQQFFKFRFIQREPVIKENEAYMVANQAYQKIRWFK</sequence>
<dbReference type="EMBL" id="CP000253">
    <property type="protein sequence ID" value="ABD29436.1"/>
    <property type="molecule type" value="Genomic_DNA"/>
</dbReference>
<dbReference type="RefSeq" id="WP_000549278.1">
    <property type="nucleotide sequence ID" value="NZ_LS483365.1"/>
</dbReference>
<dbReference type="RefSeq" id="YP_498856.1">
    <property type="nucleotide sequence ID" value="NC_007795.1"/>
</dbReference>
<dbReference type="SMR" id="Q2G184"/>
<dbReference type="STRING" id="93061.SAOUHSC_00262"/>
<dbReference type="GeneID" id="3919204"/>
<dbReference type="KEGG" id="sao:SAOUHSC_00262"/>
<dbReference type="PATRIC" id="fig|93061.5.peg.241"/>
<dbReference type="HOGENOM" id="CLU_003134_2_1_9"/>
<dbReference type="OrthoDB" id="9807790at2"/>
<dbReference type="PRO" id="PR:Q2G184"/>
<dbReference type="Proteomes" id="UP000008816">
    <property type="component" value="Chromosome"/>
</dbReference>
<dbReference type="GO" id="GO:0005886">
    <property type="term" value="C:plasma membrane"/>
    <property type="evidence" value="ECO:0007669"/>
    <property type="project" value="UniProtKB-SubCell"/>
</dbReference>
<dbReference type="GO" id="GO:0005524">
    <property type="term" value="F:ATP binding"/>
    <property type="evidence" value="ECO:0007669"/>
    <property type="project" value="UniProtKB-KW"/>
</dbReference>
<dbReference type="GO" id="GO:0003677">
    <property type="term" value="F:DNA binding"/>
    <property type="evidence" value="ECO:0007669"/>
    <property type="project" value="InterPro"/>
</dbReference>
<dbReference type="CDD" id="cd01127">
    <property type="entry name" value="TrwB_TraG_TraD_VirD4"/>
    <property type="match status" value="1"/>
</dbReference>
<dbReference type="Gene3D" id="2.60.200.20">
    <property type="match status" value="2"/>
</dbReference>
<dbReference type="Gene3D" id="3.40.50.300">
    <property type="entry name" value="P-loop containing nucleotide triphosphate hydrolases"/>
    <property type="match status" value="2"/>
</dbReference>
<dbReference type="InterPro" id="IPR023839">
    <property type="entry name" value="Firmicutes_EssC_C"/>
</dbReference>
<dbReference type="InterPro" id="IPR022206">
    <property type="entry name" value="Firmicutes_EssC_N"/>
</dbReference>
<dbReference type="InterPro" id="IPR050206">
    <property type="entry name" value="FtsK/SpoIIIE/SftA"/>
</dbReference>
<dbReference type="InterPro" id="IPR002543">
    <property type="entry name" value="FtsK_dom"/>
</dbReference>
<dbReference type="InterPro" id="IPR027417">
    <property type="entry name" value="P-loop_NTPase"/>
</dbReference>
<dbReference type="InterPro" id="IPR008984">
    <property type="entry name" value="SMAD_FHA_dom_sf"/>
</dbReference>
<dbReference type="NCBIfam" id="TIGR03928">
    <property type="entry name" value="T7_EssCb_Firm"/>
    <property type="match status" value="1"/>
</dbReference>
<dbReference type="PANTHER" id="PTHR22683:SF41">
    <property type="entry name" value="DNA TRANSLOCASE FTSK"/>
    <property type="match status" value="1"/>
</dbReference>
<dbReference type="PANTHER" id="PTHR22683">
    <property type="entry name" value="SPORULATION PROTEIN RELATED"/>
    <property type="match status" value="1"/>
</dbReference>
<dbReference type="Pfam" id="PF01580">
    <property type="entry name" value="FtsK_SpoIIIE"/>
    <property type="match status" value="2"/>
</dbReference>
<dbReference type="Pfam" id="PF12538">
    <property type="entry name" value="FtsK_SpoIIIE_N"/>
    <property type="match status" value="1"/>
</dbReference>
<dbReference type="SUPFAM" id="SSF52540">
    <property type="entry name" value="P-loop containing nucleoside triphosphate hydrolases"/>
    <property type="match status" value="2"/>
</dbReference>
<dbReference type="SUPFAM" id="SSF49879">
    <property type="entry name" value="SMAD/FHA domain"/>
    <property type="match status" value="2"/>
</dbReference>
<dbReference type="PROSITE" id="PS50901">
    <property type="entry name" value="FTSK"/>
    <property type="match status" value="2"/>
</dbReference>